<feature type="chain" id="PRO_0000286958" description="Uncharacterized membrane protein SA0701">
    <location>
        <begin position="1"/>
        <end position="356"/>
    </location>
</feature>
<feature type="transmembrane region" description="Helical" evidence="1">
    <location>
        <begin position="2"/>
        <end position="22"/>
    </location>
</feature>
<feature type="transmembrane region" description="Helical" evidence="1">
    <location>
        <begin position="35"/>
        <end position="55"/>
    </location>
</feature>
<feature type="transmembrane region" description="Helical" evidence="1">
    <location>
        <begin position="74"/>
        <end position="94"/>
    </location>
</feature>
<feature type="transmembrane region" description="Helical" evidence="1">
    <location>
        <begin position="99"/>
        <end position="119"/>
    </location>
</feature>
<feature type="transmembrane region" description="Helical" evidence="1">
    <location>
        <begin position="124"/>
        <end position="144"/>
    </location>
</feature>
<feature type="transmembrane region" description="Helical" evidence="1">
    <location>
        <begin position="154"/>
        <end position="174"/>
    </location>
</feature>
<feature type="domain" description="GGDEF" evidence="2">
    <location>
        <begin position="218"/>
        <end position="353"/>
    </location>
</feature>
<comment type="subcellular location">
    <subcellularLocation>
        <location evidence="3">Cell membrane</location>
        <topology evidence="3">Multi-pass membrane protein</topology>
    </subcellularLocation>
</comment>
<name>Y701_STAAN</name>
<evidence type="ECO:0000255" key="1"/>
<evidence type="ECO:0000255" key="2">
    <source>
        <dbReference type="PROSITE-ProRule" id="PRU00095"/>
    </source>
</evidence>
<evidence type="ECO:0000305" key="3"/>
<sequence length="356" mass="40345">MFEAFIYNISVIVAGIYLFHRLQYSENKRMVFSKAYVTVLMTIVSLLLSVYPIPYREDYLIHLTFVPLLFLGRFTNMVYTLSATVIVAIVEIVVFNNSIMYGVTLIVIAAVTSAIGPFLKQNDVLSLLILNVVTIIILFGVALVSPIYTLSEVIILIPISLIITLASAITFVDIWHFFSLVNRYENEDKYDYLTGLGNVKEFDRHLNEISRKAEKEHQSIALLLIDIDGFKDVNDTYSHKSGDAVLKQMSQLLKNYVPNQFKIFRNGGEEFSVVIHNYSLDQSVKLAENIRSGVEKSSFHLPNKEVIKLSVSIGVGYLTDDDPKSQRKVFKDADDMVHVAKNQGRNKVMFNPIINL</sequence>
<gene>
    <name type="ordered locus">SA0701</name>
</gene>
<proteinExistence type="predicted"/>
<keyword id="KW-1003">Cell membrane</keyword>
<keyword id="KW-0472">Membrane</keyword>
<keyword id="KW-0812">Transmembrane</keyword>
<keyword id="KW-1133">Transmembrane helix</keyword>
<dbReference type="EMBL" id="BA000018">
    <property type="protein sequence ID" value="BAB41934.1"/>
    <property type="molecule type" value="Genomic_DNA"/>
</dbReference>
<dbReference type="PIR" id="C89847">
    <property type="entry name" value="C89847"/>
</dbReference>
<dbReference type="SMR" id="Q99VM8"/>
<dbReference type="EnsemblBacteria" id="BAB41934">
    <property type="protein sequence ID" value="BAB41934"/>
    <property type="gene ID" value="BAB41934"/>
</dbReference>
<dbReference type="KEGG" id="sau:SA0701"/>
<dbReference type="HOGENOM" id="CLU_000445_11_1_9"/>
<dbReference type="GO" id="GO:0005886">
    <property type="term" value="C:plasma membrane"/>
    <property type="evidence" value="ECO:0007669"/>
    <property type="project" value="UniProtKB-SubCell"/>
</dbReference>
<dbReference type="GO" id="GO:0052621">
    <property type="term" value="F:diguanylate cyclase activity"/>
    <property type="evidence" value="ECO:0007669"/>
    <property type="project" value="TreeGrafter"/>
</dbReference>
<dbReference type="GO" id="GO:0000155">
    <property type="term" value="F:phosphorelay sensor kinase activity"/>
    <property type="evidence" value="ECO:0007669"/>
    <property type="project" value="InterPro"/>
</dbReference>
<dbReference type="GO" id="GO:0043709">
    <property type="term" value="P:cell adhesion involved in single-species biofilm formation"/>
    <property type="evidence" value="ECO:0007669"/>
    <property type="project" value="TreeGrafter"/>
</dbReference>
<dbReference type="GO" id="GO:0071555">
    <property type="term" value="P:cell wall organization"/>
    <property type="evidence" value="ECO:0007669"/>
    <property type="project" value="InterPro"/>
</dbReference>
<dbReference type="GO" id="GO:1902201">
    <property type="term" value="P:negative regulation of bacterial-type flagellum-dependent cell motility"/>
    <property type="evidence" value="ECO:0007669"/>
    <property type="project" value="TreeGrafter"/>
</dbReference>
<dbReference type="CDD" id="cd01949">
    <property type="entry name" value="GGDEF"/>
    <property type="match status" value="1"/>
</dbReference>
<dbReference type="FunFam" id="3.30.70.270:FF:000038">
    <property type="entry name" value="Diguanylate cyclase domain protein"/>
    <property type="match status" value="1"/>
</dbReference>
<dbReference type="Gene3D" id="3.30.70.270">
    <property type="match status" value="1"/>
</dbReference>
<dbReference type="InterPro" id="IPR050469">
    <property type="entry name" value="Diguanylate_Cyclase"/>
</dbReference>
<dbReference type="InterPro" id="IPR000160">
    <property type="entry name" value="GGDEF_dom"/>
</dbReference>
<dbReference type="InterPro" id="IPR029787">
    <property type="entry name" value="Nucleotide_cyclase"/>
</dbReference>
<dbReference type="InterPro" id="IPR043128">
    <property type="entry name" value="Rev_trsase/Diguanyl_cyclase"/>
</dbReference>
<dbReference type="InterPro" id="IPR011620">
    <property type="entry name" value="Sig_transdc_His_kinase_LytS_TM"/>
</dbReference>
<dbReference type="NCBIfam" id="TIGR00254">
    <property type="entry name" value="GGDEF"/>
    <property type="match status" value="1"/>
</dbReference>
<dbReference type="PANTHER" id="PTHR45138:SF9">
    <property type="entry name" value="DIGUANYLATE CYCLASE DGCM-RELATED"/>
    <property type="match status" value="1"/>
</dbReference>
<dbReference type="PANTHER" id="PTHR45138">
    <property type="entry name" value="REGULATORY COMPONENTS OF SENSORY TRANSDUCTION SYSTEM"/>
    <property type="match status" value="1"/>
</dbReference>
<dbReference type="Pfam" id="PF07694">
    <property type="entry name" value="5TM-5TMR_LYT"/>
    <property type="match status" value="1"/>
</dbReference>
<dbReference type="Pfam" id="PF00990">
    <property type="entry name" value="GGDEF"/>
    <property type="match status" value="1"/>
</dbReference>
<dbReference type="SMART" id="SM00267">
    <property type="entry name" value="GGDEF"/>
    <property type="match status" value="1"/>
</dbReference>
<dbReference type="SUPFAM" id="SSF55073">
    <property type="entry name" value="Nucleotide cyclase"/>
    <property type="match status" value="1"/>
</dbReference>
<dbReference type="PROSITE" id="PS50887">
    <property type="entry name" value="GGDEF"/>
    <property type="match status" value="1"/>
</dbReference>
<organism>
    <name type="scientific">Staphylococcus aureus (strain N315)</name>
    <dbReference type="NCBI Taxonomy" id="158879"/>
    <lineage>
        <taxon>Bacteria</taxon>
        <taxon>Bacillati</taxon>
        <taxon>Bacillota</taxon>
        <taxon>Bacilli</taxon>
        <taxon>Bacillales</taxon>
        <taxon>Staphylococcaceae</taxon>
        <taxon>Staphylococcus</taxon>
    </lineage>
</organism>
<protein>
    <recommendedName>
        <fullName>Uncharacterized membrane protein SA0701</fullName>
    </recommendedName>
</protein>
<accession>Q99VM8</accession>
<reference key="1">
    <citation type="journal article" date="2001" name="Lancet">
        <title>Whole genome sequencing of meticillin-resistant Staphylococcus aureus.</title>
        <authorList>
            <person name="Kuroda M."/>
            <person name="Ohta T."/>
            <person name="Uchiyama I."/>
            <person name="Baba T."/>
            <person name="Yuzawa H."/>
            <person name="Kobayashi I."/>
            <person name="Cui L."/>
            <person name="Oguchi A."/>
            <person name="Aoki K."/>
            <person name="Nagai Y."/>
            <person name="Lian J.-Q."/>
            <person name="Ito T."/>
            <person name="Kanamori M."/>
            <person name="Matsumaru H."/>
            <person name="Maruyama A."/>
            <person name="Murakami H."/>
            <person name="Hosoyama A."/>
            <person name="Mizutani-Ui Y."/>
            <person name="Takahashi N.K."/>
            <person name="Sawano T."/>
            <person name="Inoue R."/>
            <person name="Kaito C."/>
            <person name="Sekimizu K."/>
            <person name="Hirakawa H."/>
            <person name="Kuhara S."/>
            <person name="Goto S."/>
            <person name="Yabuzaki J."/>
            <person name="Kanehisa M."/>
            <person name="Yamashita A."/>
            <person name="Oshima K."/>
            <person name="Furuya K."/>
            <person name="Yoshino C."/>
            <person name="Shiba T."/>
            <person name="Hattori M."/>
            <person name="Ogasawara N."/>
            <person name="Hayashi H."/>
            <person name="Hiramatsu K."/>
        </authorList>
    </citation>
    <scope>NUCLEOTIDE SEQUENCE [LARGE SCALE GENOMIC DNA]</scope>
    <source>
        <strain>N315</strain>
    </source>
</reference>